<feature type="chain" id="PRO_0000350370" description="Dual-specificity RNA methyltransferase RlmN">
    <location>
        <begin position="1"/>
        <end position="399"/>
    </location>
</feature>
<feature type="domain" description="Radical SAM core" evidence="2">
    <location>
        <begin position="128"/>
        <end position="371"/>
    </location>
</feature>
<feature type="active site" description="Proton acceptor" evidence="1">
    <location>
        <position position="122"/>
    </location>
</feature>
<feature type="active site" description="S-methylcysteine intermediate" evidence="1">
    <location>
        <position position="374"/>
    </location>
</feature>
<feature type="binding site" evidence="1">
    <location>
        <position position="142"/>
    </location>
    <ligand>
        <name>[4Fe-4S] cluster</name>
        <dbReference type="ChEBI" id="CHEBI:49883"/>
        <note>4Fe-4S-S-AdoMet</note>
    </ligand>
</feature>
<feature type="binding site" evidence="1">
    <location>
        <position position="146"/>
    </location>
    <ligand>
        <name>[4Fe-4S] cluster</name>
        <dbReference type="ChEBI" id="CHEBI:49883"/>
        <note>4Fe-4S-S-AdoMet</note>
    </ligand>
</feature>
<feature type="binding site" evidence="1">
    <location>
        <position position="149"/>
    </location>
    <ligand>
        <name>[4Fe-4S] cluster</name>
        <dbReference type="ChEBI" id="CHEBI:49883"/>
        <note>4Fe-4S-S-AdoMet</note>
    </ligand>
</feature>
<feature type="binding site" evidence="1">
    <location>
        <begin position="200"/>
        <end position="201"/>
    </location>
    <ligand>
        <name>S-adenosyl-L-methionine</name>
        <dbReference type="ChEBI" id="CHEBI:59789"/>
    </ligand>
</feature>
<feature type="binding site" evidence="1">
    <location>
        <position position="232"/>
    </location>
    <ligand>
        <name>S-adenosyl-L-methionine</name>
        <dbReference type="ChEBI" id="CHEBI:59789"/>
    </ligand>
</feature>
<feature type="binding site" evidence="1">
    <location>
        <begin position="254"/>
        <end position="256"/>
    </location>
    <ligand>
        <name>S-adenosyl-L-methionine</name>
        <dbReference type="ChEBI" id="CHEBI:59789"/>
    </ligand>
</feature>
<feature type="binding site" evidence="1">
    <location>
        <position position="331"/>
    </location>
    <ligand>
        <name>S-adenosyl-L-methionine</name>
        <dbReference type="ChEBI" id="CHEBI:59789"/>
    </ligand>
</feature>
<feature type="disulfide bond" description="(transient)" evidence="1">
    <location>
        <begin position="135"/>
        <end position="374"/>
    </location>
</feature>
<evidence type="ECO:0000255" key="1">
    <source>
        <dbReference type="HAMAP-Rule" id="MF_01849"/>
    </source>
</evidence>
<evidence type="ECO:0000255" key="2">
    <source>
        <dbReference type="PROSITE-ProRule" id="PRU01266"/>
    </source>
</evidence>
<sequence>MTLSTSQSLLEKTALETYVPPARPSLIGLSRAELAEALGGIGVAASQRKMRAQQLWHWMYFRGVQEFAEMTSISKEMRSQLAEHFTVARPEVVAEQISNDGTRKWLLRLPSGVSGEKAHEVECVYIPETDRGTLCVSSQVGCTLNCSFCHTGTQKLVRNLTAGEIVGQVMVARDRLNDWADRETPNGNRLVTNVVMMGMGEPLYNFDAVRDALLIVSDNEGIGISRRRVTLSTSGVVPNIVRAGEEIGVMLAISLHAVRDELRDELVPLNRKYPLAELLQACRDYPGASNARRITFEYVMLKDVNDSLDDAKLLVKLLSGIPAKINLIPFNPWPGTAYKCSDWDQIEKFSEYIFNAGYSSPVRTPRGRDILAACGQLKSETEKLTAREREALRAMAMTD</sequence>
<proteinExistence type="inferred from homology"/>
<gene>
    <name evidence="1" type="primary">rlmN</name>
    <name type="ordered locus">RPC_0035</name>
</gene>
<dbReference type="EC" id="2.1.1.192" evidence="1"/>
<dbReference type="EMBL" id="CP000301">
    <property type="protein sequence ID" value="ABD85614.1"/>
    <property type="molecule type" value="Genomic_DNA"/>
</dbReference>
<dbReference type="SMR" id="Q21DC2"/>
<dbReference type="STRING" id="316056.RPC_0035"/>
<dbReference type="KEGG" id="rpc:RPC_0035"/>
<dbReference type="eggNOG" id="COG0820">
    <property type="taxonomic scope" value="Bacteria"/>
</dbReference>
<dbReference type="HOGENOM" id="CLU_029101_0_0_5"/>
<dbReference type="OrthoDB" id="9793973at2"/>
<dbReference type="GO" id="GO:0005737">
    <property type="term" value="C:cytoplasm"/>
    <property type="evidence" value="ECO:0007669"/>
    <property type="project" value="UniProtKB-SubCell"/>
</dbReference>
<dbReference type="GO" id="GO:0051539">
    <property type="term" value="F:4 iron, 4 sulfur cluster binding"/>
    <property type="evidence" value="ECO:0007669"/>
    <property type="project" value="UniProtKB-UniRule"/>
</dbReference>
<dbReference type="GO" id="GO:0046872">
    <property type="term" value="F:metal ion binding"/>
    <property type="evidence" value="ECO:0007669"/>
    <property type="project" value="UniProtKB-KW"/>
</dbReference>
<dbReference type="GO" id="GO:0070040">
    <property type="term" value="F:rRNA (adenine(2503)-C2-)-methyltransferase activity"/>
    <property type="evidence" value="ECO:0007669"/>
    <property type="project" value="UniProtKB-UniRule"/>
</dbReference>
<dbReference type="GO" id="GO:0019843">
    <property type="term" value="F:rRNA binding"/>
    <property type="evidence" value="ECO:0007669"/>
    <property type="project" value="UniProtKB-UniRule"/>
</dbReference>
<dbReference type="GO" id="GO:0002935">
    <property type="term" value="F:tRNA (adenine(37)-C2)-methyltransferase activity"/>
    <property type="evidence" value="ECO:0007669"/>
    <property type="project" value="UniProtKB-UniRule"/>
</dbReference>
<dbReference type="GO" id="GO:0000049">
    <property type="term" value="F:tRNA binding"/>
    <property type="evidence" value="ECO:0007669"/>
    <property type="project" value="UniProtKB-UniRule"/>
</dbReference>
<dbReference type="GO" id="GO:0070475">
    <property type="term" value="P:rRNA base methylation"/>
    <property type="evidence" value="ECO:0007669"/>
    <property type="project" value="UniProtKB-UniRule"/>
</dbReference>
<dbReference type="GO" id="GO:0030488">
    <property type="term" value="P:tRNA methylation"/>
    <property type="evidence" value="ECO:0007669"/>
    <property type="project" value="UniProtKB-UniRule"/>
</dbReference>
<dbReference type="CDD" id="cd01335">
    <property type="entry name" value="Radical_SAM"/>
    <property type="match status" value="1"/>
</dbReference>
<dbReference type="FunFam" id="3.20.20.70:FF:000008">
    <property type="entry name" value="Dual-specificity RNA methyltransferase RlmN"/>
    <property type="match status" value="1"/>
</dbReference>
<dbReference type="Gene3D" id="1.10.150.530">
    <property type="match status" value="1"/>
</dbReference>
<dbReference type="Gene3D" id="3.20.20.70">
    <property type="entry name" value="Aldolase class I"/>
    <property type="match status" value="1"/>
</dbReference>
<dbReference type="HAMAP" id="MF_01849">
    <property type="entry name" value="RNA_methyltr_RlmN"/>
    <property type="match status" value="1"/>
</dbReference>
<dbReference type="InterPro" id="IPR013785">
    <property type="entry name" value="Aldolase_TIM"/>
</dbReference>
<dbReference type="InterPro" id="IPR040072">
    <property type="entry name" value="Methyltransferase_A"/>
</dbReference>
<dbReference type="InterPro" id="IPR048641">
    <property type="entry name" value="RlmN_N"/>
</dbReference>
<dbReference type="InterPro" id="IPR027492">
    <property type="entry name" value="RNA_MTrfase_RlmN"/>
</dbReference>
<dbReference type="InterPro" id="IPR004383">
    <property type="entry name" value="rRNA_lsu_MTrfase_RlmN/Cfr"/>
</dbReference>
<dbReference type="InterPro" id="IPR007197">
    <property type="entry name" value="rSAM"/>
</dbReference>
<dbReference type="NCBIfam" id="TIGR00048">
    <property type="entry name" value="rRNA_mod_RlmN"/>
    <property type="match status" value="1"/>
</dbReference>
<dbReference type="PANTHER" id="PTHR30544">
    <property type="entry name" value="23S RRNA METHYLTRANSFERASE"/>
    <property type="match status" value="1"/>
</dbReference>
<dbReference type="PANTHER" id="PTHR30544:SF5">
    <property type="entry name" value="RADICAL SAM CORE DOMAIN-CONTAINING PROTEIN"/>
    <property type="match status" value="1"/>
</dbReference>
<dbReference type="Pfam" id="PF04055">
    <property type="entry name" value="Radical_SAM"/>
    <property type="match status" value="1"/>
</dbReference>
<dbReference type="Pfam" id="PF21016">
    <property type="entry name" value="RlmN_N"/>
    <property type="match status" value="1"/>
</dbReference>
<dbReference type="PIRSF" id="PIRSF006004">
    <property type="entry name" value="CHP00048"/>
    <property type="match status" value="1"/>
</dbReference>
<dbReference type="SFLD" id="SFLDF00275">
    <property type="entry name" value="adenosine_C2_methyltransferase"/>
    <property type="match status" value="1"/>
</dbReference>
<dbReference type="SFLD" id="SFLDS00029">
    <property type="entry name" value="Radical_SAM"/>
    <property type="match status" value="1"/>
</dbReference>
<dbReference type="SUPFAM" id="SSF102114">
    <property type="entry name" value="Radical SAM enzymes"/>
    <property type="match status" value="1"/>
</dbReference>
<dbReference type="PROSITE" id="PS51918">
    <property type="entry name" value="RADICAL_SAM"/>
    <property type="match status" value="1"/>
</dbReference>
<keyword id="KW-0004">4Fe-4S</keyword>
<keyword id="KW-0963">Cytoplasm</keyword>
<keyword id="KW-1015">Disulfide bond</keyword>
<keyword id="KW-0408">Iron</keyword>
<keyword id="KW-0411">Iron-sulfur</keyword>
<keyword id="KW-0479">Metal-binding</keyword>
<keyword id="KW-0489">Methyltransferase</keyword>
<keyword id="KW-0698">rRNA processing</keyword>
<keyword id="KW-0949">S-adenosyl-L-methionine</keyword>
<keyword id="KW-0808">Transferase</keyword>
<keyword id="KW-0819">tRNA processing</keyword>
<name>RLMN_RHOPB</name>
<protein>
    <recommendedName>
        <fullName evidence="1">Dual-specificity RNA methyltransferase RlmN</fullName>
        <ecNumber evidence="1">2.1.1.192</ecNumber>
    </recommendedName>
    <alternativeName>
        <fullName evidence="1">23S rRNA (adenine(2503)-C(2))-methyltransferase</fullName>
    </alternativeName>
    <alternativeName>
        <fullName evidence="1">23S rRNA m2A2503 methyltransferase</fullName>
    </alternativeName>
    <alternativeName>
        <fullName evidence="1">Ribosomal RNA large subunit methyltransferase N</fullName>
    </alternativeName>
    <alternativeName>
        <fullName evidence="1">tRNA (adenine(37)-C(2))-methyltransferase</fullName>
    </alternativeName>
    <alternativeName>
        <fullName evidence="1">tRNA m2A37 methyltransferase</fullName>
    </alternativeName>
</protein>
<accession>Q21DC2</accession>
<organism>
    <name type="scientific">Rhodopseudomonas palustris (strain BisB18)</name>
    <dbReference type="NCBI Taxonomy" id="316056"/>
    <lineage>
        <taxon>Bacteria</taxon>
        <taxon>Pseudomonadati</taxon>
        <taxon>Pseudomonadota</taxon>
        <taxon>Alphaproteobacteria</taxon>
        <taxon>Hyphomicrobiales</taxon>
        <taxon>Nitrobacteraceae</taxon>
        <taxon>Rhodopseudomonas</taxon>
    </lineage>
</organism>
<comment type="function">
    <text evidence="1">Specifically methylates position 2 of adenine 2503 in 23S rRNA and position 2 of adenine 37 in tRNAs. m2A2503 modification seems to play a crucial role in the proofreading step occurring at the peptidyl transferase center and thus would serve to optimize ribosomal fidelity.</text>
</comment>
<comment type="catalytic activity">
    <reaction evidence="1">
        <text>adenosine(2503) in 23S rRNA + 2 reduced [2Fe-2S]-[ferredoxin] + 2 S-adenosyl-L-methionine = 2-methyladenosine(2503) in 23S rRNA + 5'-deoxyadenosine + L-methionine + 2 oxidized [2Fe-2S]-[ferredoxin] + S-adenosyl-L-homocysteine</text>
        <dbReference type="Rhea" id="RHEA:42916"/>
        <dbReference type="Rhea" id="RHEA-COMP:10000"/>
        <dbReference type="Rhea" id="RHEA-COMP:10001"/>
        <dbReference type="Rhea" id="RHEA-COMP:10152"/>
        <dbReference type="Rhea" id="RHEA-COMP:10282"/>
        <dbReference type="ChEBI" id="CHEBI:17319"/>
        <dbReference type="ChEBI" id="CHEBI:33737"/>
        <dbReference type="ChEBI" id="CHEBI:33738"/>
        <dbReference type="ChEBI" id="CHEBI:57844"/>
        <dbReference type="ChEBI" id="CHEBI:57856"/>
        <dbReference type="ChEBI" id="CHEBI:59789"/>
        <dbReference type="ChEBI" id="CHEBI:74411"/>
        <dbReference type="ChEBI" id="CHEBI:74497"/>
        <dbReference type="EC" id="2.1.1.192"/>
    </reaction>
</comment>
<comment type="catalytic activity">
    <reaction evidence="1">
        <text>adenosine(37) in tRNA + 2 reduced [2Fe-2S]-[ferredoxin] + 2 S-adenosyl-L-methionine = 2-methyladenosine(37) in tRNA + 5'-deoxyadenosine + L-methionine + 2 oxidized [2Fe-2S]-[ferredoxin] + S-adenosyl-L-homocysteine</text>
        <dbReference type="Rhea" id="RHEA:43332"/>
        <dbReference type="Rhea" id="RHEA-COMP:10000"/>
        <dbReference type="Rhea" id="RHEA-COMP:10001"/>
        <dbReference type="Rhea" id="RHEA-COMP:10162"/>
        <dbReference type="Rhea" id="RHEA-COMP:10485"/>
        <dbReference type="ChEBI" id="CHEBI:17319"/>
        <dbReference type="ChEBI" id="CHEBI:33737"/>
        <dbReference type="ChEBI" id="CHEBI:33738"/>
        <dbReference type="ChEBI" id="CHEBI:57844"/>
        <dbReference type="ChEBI" id="CHEBI:57856"/>
        <dbReference type="ChEBI" id="CHEBI:59789"/>
        <dbReference type="ChEBI" id="CHEBI:74411"/>
        <dbReference type="ChEBI" id="CHEBI:74497"/>
        <dbReference type="EC" id="2.1.1.192"/>
    </reaction>
</comment>
<comment type="cofactor">
    <cofactor evidence="1">
        <name>[4Fe-4S] cluster</name>
        <dbReference type="ChEBI" id="CHEBI:49883"/>
    </cofactor>
    <text evidence="1">Binds 1 [4Fe-4S] cluster. The cluster is coordinated with 3 cysteines and an exchangeable S-adenosyl-L-methionine.</text>
</comment>
<comment type="subcellular location">
    <subcellularLocation>
        <location evidence="1">Cytoplasm</location>
    </subcellularLocation>
</comment>
<comment type="miscellaneous">
    <text evidence="1">Reaction proceeds by a ping-pong mechanism involving intermediate methylation of a conserved cysteine residue.</text>
</comment>
<comment type="similarity">
    <text evidence="1">Belongs to the radical SAM superfamily. RlmN family.</text>
</comment>
<reference key="1">
    <citation type="submission" date="2006-03" db="EMBL/GenBank/DDBJ databases">
        <title>Complete sequence of Rhodopseudomonas palustris BisB18.</title>
        <authorList>
            <consortium name="US DOE Joint Genome Institute"/>
            <person name="Copeland A."/>
            <person name="Lucas S."/>
            <person name="Lapidus A."/>
            <person name="Barry K."/>
            <person name="Detter J.C."/>
            <person name="Glavina del Rio T."/>
            <person name="Hammon N."/>
            <person name="Israni S."/>
            <person name="Dalin E."/>
            <person name="Tice H."/>
            <person name="Pitluck S."/>
            <person name="Chain P."/>
            <person name="Malfatti S."/>
            <person name="Shin M."/>
            <person name="Vergez L."/>
            <person name="Schmutz J."/>
            <person name="Larimer F."/>
            <person name="Land M."/>
            <person name="Hauser L."/>
            <person name="Pelletier D.A."/>
            <person name="Kyrpides N."/>
            <person name="Anderson I."/>
            <person name="Oda Y."/>
            <person name="Harwood C.S."/>
            <person name="Richardson P."/>
        </authorList>
    </citation>
    <scope>NUCLEOTIDE SEQUENCE [LARGE SCALE GENOMIC DNA]</scope>
    <source>
        <strain>BisB18</strain>
    </source>
</reference>